<feature type="signal peptide" evidence="1">
    <location>
        <begin position="1"/>
        <end position="35"/>
    </location>
</feature>
<feature type="chain" id="PRO_0000359529" description="Serine protease SplA">
    <location>
        <begin position="36"/>
        <end position="235"/>
    </location>
</feature>
<feature type="active site" description="Charge relay system" evidence="1">
    <location>
        <position position="74"/>
    </location>
</feature>
<feature type="active site" description="Charge relay system" evidence="1">
    <location>
        <position position="113"/>
    </location>
</feature>
<feature type="active site" description="Charge relay system" evidence="1">
    <location>
        <position position="189"/>
    </location>
</feature>
<dbReference type="EC" id="3.4.21.-"/>
<dbReference type="EMBL" id="AP009324">
    <property type="protein sequence ID" value="BAF78681.1"/>
    <property type="molecule type" value="Genomic_DNA"/>
</dbReference>
<dbReference type="RefSeq" id="WP_001039427.1">
    <property type="nucleotide sequence ID" value="NC_009782.1"/>
</dbReference>
<dbReference type="SMR" id="A7X3R0"/>
<dbReference type="MEROPS" id="S01.503"/>
<dbReference type="KEGG" id="saw:SAHV_1798"/>
<dbReference type="HOGENOM" id="CLU_073589_2_0_9"/>
<dbReference type="GO" id="GO:0005576">
    <property type="term" value="C:extracellular region"/>
    <property type="evidence" value="ECO:0007669"/>
    <property type="project" value="UniProtKB-SubCell"/>
</dbReference>
<dbReference type="GO" id="GO:0004252">
    <property type="term" value="F:serine-type endopeptidase activity"/>
    <property type="evidence" value="ECO:0007669"/>
    <property type="project" value="InterPro"/>
</dbReference>
<dbReference type="GO" id="GO:0006508">
    <property type="term" value="P:proteolysis"/>
    <property type="evidence" value="ECO:0007669"/>
    <property type="project" value="UniProtKB-KW"/>
</dbReference>
<dbReference type="Gene3D" id="2.40.10.10">
    <property type="entry name" value="Trypsin-like serine proteases"/>
    <property type="match status" value="2"/>
</dbReference>
<dbReference type="InterPro" id="IPR009003">
    <property type="entry name" value="Peptidase_S1_PA"/>
</dbReference>
<dbReference type="InterPro" id="IPR043504">
    <property type="entry name" value="Peptidase_S1_PA_chymotrypsin"/>
</dbReference>
<dbReference type="InterPro" id="IPR008256">
    <property type="entry name" value="Peptidase_S1B"/>
</dbReference>
<dbReference type="InterPro" id="IPR008353">
    <property type="entry name" value="Peptidase_S1B_tx"/>
</dbReference>
<dbReference type="InterPro" id="IPR001254">
    <property type="entry name" value="Trypsin_dom"/>
</dbReference>
<dbReference type="InterPro" id="IPR028301">
    <property type="entry name" value="V8_his_AS"/>
</dbReference>
<dbReference type="PANTHER" id="PTHR43019:SF23">
    <property type="entry name" value="PROTEASE DO-LIKE 5, CHLOROPLASTIC"/>
    <property type="match status" value="1"/>
</dbReference>
<dbReference type="PANTHER" id="PTHR43019">
    <property type="entry name" value="SERINE ENDOPROTEASE DEGS"/>
    <property type="match status" value="1"/>
</dbReference>
<dbReference type="Pfam" id="PF00089">
    <property type="entry name" value="Trypsin"/>
    <property type="match status" value="1"/>
</dbReference>
<dbReference type="PRINTS" id="PR01774">
    <property type="entry name" value="EXFOLTOXIN"/>
</dbReference>
<dbReference type="PRINTS" id="PR00839">
    <property type="entry name" value="V8PROTEASE"/>
</dbReference>
<dbReference type="SUPFAM" id="SSF50494">
    <property type="entry name" value="Trypsin-like serine proteases"/>
    <property type="match status" value="1"/>
</dbReference>
<dbReference type="PROSITE" id="PS00672">
    <property type="entry name" value="V8_HIS"/>
    <property type="match status" value="1"/>
</dbReference>
<evidence type="ECO:0000250" key="1"/>
<evidence type="ECO:0000305" key="2"/>
<sequence>MNKNVMVKGLTALTILTSLGFAENISNQPHSIAKAEKNVKEITDATKAPYNSVVAFAGGTGVVVGKNTIVTNKHIAKSNDIFKNRVAAHYSSKGKGGGNYDVKDIVEYPGKEDLAIVHVHETSTEGLNFNKNVSYTKFAEGAKAKDRISVIGYPKGAQTKYKMFESTGTINHISGTFIEFDAYAQPGNSGSPVLNSKHELIGILYAGSGKDESEKNFGVYFTPQLKEFIQNNIEK</sequence>
<comment type="subcellular location">
    <subcellularLocation>
        <location evidence="1">Secreted</location>
    </subcellularLocation>
</comment>
<comment type="similarity">
    <text evidence="2">Belongs to the peptidase S1B family.</text>
</comment>
<reference key="1">
    <citation type="journal article" date="2008" name="Antimicrob. Agents Chemother.">
        <title>Mutated response regulator graR is responsible for phenotypic conversion of Staphylococcus aureus from heterogeneous vancomycin-intermediate resistance to vancomycin-intermediate resistance.</title>
        <authorList>
            <person name="Neoh H.-M."/>
            <person name="Cui L."/>
            <person name="Yuzawa H."/>
            <person name="Takeuchi F."/>
            <person name="Matsuo M."/>
            <person name="Hiramatsu K."/>
        </authorList>
    </citation>
    <scope>NUCLEOTIDE SEQUENCE [LARGE SCALE GENOMIC DNA]</scope>
    <source>
        <strain>Mu3 / ATCC 700698</strain>
    </source>
</reference>
<keyword id="KW-0378">Hydrolase</keyword>
<keyword id="KW-0645">Protease</keyword>
<keyword id="KW-0964">Secreted</keyword>
<keyword id="KW-0720">Serine protease</keyword>
<keyword id="KW-0732">Signal</keyword>
<accession>A7X3R0</accession>
<protein>
    <recommendedName>
        <fullName>Serine protease SplA</fullName>
        <ecNumber>3.4.21.-</ecNumber>
    </recommendedName>
</protein>
<name>SPLA_STAA1</name>
<proteinExistence type="inferred from homology"/>
<organism>
    <name type="scientific">Staphylococcus aureus (strain Mu3 / ATCC 700698)</name>
    <dbReference type="NCBI Taxonomy" id="418127"/>
    <lineage>
        <taxon>Bacteria</taxon>
        <taxon>Bacillati</taxon>
        <taxon>Bacillota</taxon>
        <taxon>Bacilli</taxon>
        <taxon>Bacillales</taxon>
        <taxon>Staphylococcaceae</taxon>
        <taxon>Staphylococcus</taxon>
    </lineage>
</organism>
<gene>
    <name type="primary">splA</name>
    <name type="ordered locus">SAHV_1798</name>
</gene>